<evidence type="ECO:0000255" key="1">
    <source>
        <dbReference type="HAMAP-Rule" id="MF_01324"/>
    </source>
</evidence>
<feature type="chain" id="PRO_0000067921" description="DNA-directed RNA polymerase subunit beta''">
    <location>
        <begin position="1"/>
        <end position="1269"/>
    </location>
</feature>
<feature type="binding site" evidence="1">
    <location>
        <position position="226"/>
    </location>
    <ligand>
        <name>Zn(2+)</name>
        <dbReference type="ChEBI" id="CHEBI:29105"/>
    </ligand>
</feature>
<feature type="binding site" evidence="1">
    <location>
        <position position="301"/>
    </location>
    <ligand>
        <name>Zn(2+)</name>
        <dbReference type="ChEBI" id="CHEBI:29105"/>
    </ligand>
</feature>
<feature type="binding site" evidence="1">
    <location>
        <position position="308"/>
    </location>
    <ligand>
        <name>Zn(2+)</name>
        <dbReference type="ChEBI" id="CHEBI:29105"/>
    </ligand>
</feature>
<feature type="binding site" evidence="1">
    <location>
        <position position="311"/>
    </location>
    <ligand>
        <name>Zn(2+)</name>
        <dbReference type="ChEBI" id="CHEBI:29105"/>
    </ligand>
</feature>
<reference key="1">
    <citation type="journal article" date="2000" name="J. Mol. Evol.">
        <title>The structure and gene repertoire of an ancient red algal plastid genome.</title>
        <authorList>
            <person name="Gloeckner G."/>
            <person name="Rosenthal A."/>
            <person name="Valentin K.-U."/>
        </authorList>
    </citation>
    <scope>NUCLEOTIDE SEQUENCE [LARGE SCALE GENOMIC DNA]</scope>
    <source>
        <strain>RK-1</strain>
    </source>
</reference>
<geneLocation type="chloroplast"/>
<sequence length="1269" mass="143047">MVIDKKKVKNRTPYFLNRIIEKSELREIIEVVFHKNGIAKASLIADNLKEIGFGFATKAGISISIEDLKIPPNKSRILQITNQELRKTEISFKRAEITTIEKSQKSTDTWNNASEALKDEIIKYYRLTDPLNPVYMMAFSGARGNLSQVKQLVGMRGLMADPNGQIIELPILSNFREGLNVTEYLISSYGARKGLVDTSLRTADSGYLTRRLVDVAQDIIVREIDCKTNNGITFSNIQNNEKIIIPLYKRLIGRILADDVKNPITPQVNIASKNTLITGNLIKEFKKNNIQKIKLRSPLTCQSYRSICQKCYGASLSDGKLVDIGEAIGIIAAQSIGEPGTQLTMRTFHTGGVFTAEFSKPIKTLFEGVIKYPSNLKFHHVRTRHGDDAIIIEKSATFDIRTTQSERKITLETGTTLLVKDNSFIKKNQVIAETSTSGRLITEKSTKDLISNSAGEIYFSDITIEERVDRHGNLTKISKQHGLIWILSGEVYNFPMGANLVVQNSFEVNKGCLLAKALIKSRHSGISRIRCAANYYAIDIILGTVTIRNANLYKDSKLFNNNYLLKTSNKKNFVVKALVGQKLSHSDIIAELIDDQYLTNTGGIVKYVNLKLAKTHKDDSEYTLSGIGYIFFIPQETHQINKDASILLANSGDYVNKNTEIAKGVFCKCSGLLEIIKSNNIIKEIIIKPGVVYPVSNNLSTFTNKIFYPGEKIIDNIVTNKIVYVEHIKLINKSCILIRPVNQYKVSNTESLFDFVTKGENKDLISLKVVNKSFFKDGEVIKSVKGVSLVNIQLIFYTKPSATAVTTKMEFVKDLDKSTNSTSEIKLRITATETTKIKYKQQKNIISQILIKEGQYITKDFPIIETLFLSRHDGRVVIKSNFKQKNNACLIIISPSNKKEIYINKKEHKLKIGDFIRVGDHLGTNKNFKSPYSGEVLDINDKLITIRIAEPYLISPGTLIHVNHGELIRKGDYLALLVFDKIKTGDIIQGLPRIEEILEARKPRETCHLAKFDGKIYVHYNDKGESLISLESQKKEKYVYILRLNQRVLVQSGTEVTIGEPITDGLINPHEMLEIFFEYFLTQTSPIQATKASFEKIRLELLKEIQQVYQSQKIEINDKHIEVIIRQMTSKVLIQERGDTTLFPGELVTINQIEKINSAIIAVNKKEAKYKPVLLGITKASLNTDSFISAASFQETTRILTEAAIEGKVDWLKGLKENVIIGRLIPGGTGLISLDNKDSIKMRLALRHKKNFLNKTFKKKNNKFLNKTY</sequence>
<dbReference type="EC" id="2.7.7.6" evidence="1"/>
<dbReference type="EMBL" id="AF022186">
    <property type="protein sequence ID" value="AAF13013.1"/>
    <property type="molecule type" value="Genomic_DNA"/>
</dbReference>
<dbReference type="RefSeq" id="NP_045033.1">
    <property type="nucleotide sequence ID" value="NC_001840.1"/>
</dbReference>
<dbReference type="SMR" id="Q9TM34"/>
<dbReference type="GeneID" id="800295"/>
<dbReference type="GO" id="GO:0009507">
    <property type="term" value="C:chloroplast"/>
    <property type="evidence" value="ECO:0007669"/>
    <property type="project" value="UniProtKB-SubCell"/>
</dbReference>
<dbReference type="GO" id="GO:0000428">
    <property type="term" value="C:DNA-directed RNA polymerase complex"/>
    <property type="evidence" value="ECO:0007669"/>
    <property type="project" value="UniProtKB-KW"/>
</dbReference>
<dbReference type="GO" id="GO:0005739">
    <property type="term" value="C:mitochondrion"/>
    <property type="evidence" value="ECO:0007669"/>
    <property type="project" value="GOC"/>
</dbReference>
<dbReference type="GO" id="GO:0003677">
    <property type="term" value="F:DNA binding"/>
    <property type="evidence" value="ECO:0007669"/>
    <property type="project" value="UniProtKB-UniRule"/>
</dbReference>
<dbReference type="GO" id="GO:0003899">
    <property type="term" value="F:DNA-directed RNA polymerase activity"/>
    <property type="evidence" value="ECO:0007669"/>
    <property type="project" value="UniProtKB-UniRule"/>
</dbReference>
<dbReference type="GO" id="GO:0008270">
    <property type="term" value="F:zinc ion binding"/>
    <property type="evidence" value="ECO:0007669"/>
    <property type="project" value="UniProtKB-UniRule"/>
</dbReference>
<dbReference type="GO" id="GO:0006351">
    <property type="term" value="P:DNA-templated transcription"/>
    <property type="evidence" value="ECO:0007669"/>
    <property type="project" value="UniProtKB-UniRule"/>
</dbReference>
<dbReference type="CDD" id="cd02655">
    <property type="entry name" value="RNAP_beta'_C"/>
    <property type="match status" value="1"/>
</dbReference>
<dbReference type="Gene3D" id="1.10.132.30">
    <property type="match status" value="1"/>
</dbReference>
<dbReference type="Gene3D" id="1.10.150.390">
    <property type="match status" value="1"/>
</dbReference>
<dbReference type="Gene3D" id="1.10.1790.20">
    <property type="match status" value="1"/>
</dbReference>
<dbReference type="Gene3D" id="2.40.50.100">
    <property type="match status" value="2"/>
</dbReference>
<dbReference type="Gene3D" id="1.10.274.100">
    <property type="entry name" value="RNA polymerase Rpb1, domain 3"/>
    <property type="match status" value="1"/>
</dbReference>
<dbReference type="HAMAP" id="MF_01324">
    <property type="entry name" value="RNApol_bact_RpoC2"/>
    <property type="match status" value="1"/>
</dbReference>
<dbReference type="InterPro" id="IPR012756">
    <property type="entry name" value="DNA-dir_RpoC2_beta_pp"/>
</dbReference>
<dbReference type="InterPro" id="IPR045867">
    <property type="entry name" value="DNA-dir_RpoC_beta_prime"/>
</dbReference>
<dbReference type="InterPro" id="IPR007066">
    <property type="entry name" value="RNA_pol_Rpb1_3"/>
</dbReference>
<dbReference type="InterPro" id="IPR042102">
    <property type="entry name" value="RNA_pol_Rpb1_3_sf"/>
</dbReference>
<dbReference type="InterPro" id="IPR007083">
    <property type="entry name" value="RNA_pol_Rpb1_4"/>
</dbReference>
<dbReference type="InterPro" id="IPR007081">
    <property type="entry name" value="RNA_pol_Rpb1_5"/>
</dbReference>
<dbReference type="InterPro" id="IPR038120">
    <property type="entry name" value="Rpb1_funnel_sf"/>
</dbReference>
<dbReference type="NCBIfam" id="TIGR02388">
    <property type="entry name" value="rpoC2_cyan"/>
    <property type="match status" value="1"/>
</dbReference>
<dbReference type="PANTHER" id="PTHR19376">
    <property type="entry name" value="DNA-DIRECTED RNA POLYMERASE"/>
    <property type="match status" value="1"/>
</dbReference>
<dbReference type="PANTHER" id="PTHR19376:SF54">
    <property type="entry name" value="DNA-DIRECTED RNA POLYMERASE SUBUNIT BETA"/>
    <property type="match status" value="1"/>
</dbReference>
<dbReference type="Pfam" id="PF04983">
    <property type="entry name" value="RNA_pol_Rpb1_3"/>
    <property type="match status" value="1"/>
</dbReference>
<dbReference type="Pfam" id="PF05000">
    <property type="entry name" value="RNA_pol_Rpb1_4"/>
    <property type="match status" value="1"/>
</dbReference>
<dbReference type="Pfam" id="PF04998">
    <property type="entry name" value="RNA_pol_Rpb1_5"/>
    <property type="match status" value="1"/>
</dbReference>
<dbReference type="SUPFAM" id="SSF64484">
    <property type="entry name" value="beta and beta-prime subunits of DNA dependent RNA-polymerase"/>
    <property type="match status" value="1"/>
</dbReference>
<accession>Q9TM34</accession>
<protein>
    <recommendedName>
        <fullName evidence="1">DNA-directed RNA polymerase subunit beta''</fullName>
        <ecNumber evidence="1">2.7.7.6</ecNumber>
    </recommendedName>
    <alternativeName>
        <fullName evidence="1">PEP</fullName>
    </alternativeName>
    <alternativeName>
        <fullName evidence="1">Plastid-encoded RNA polymerase subunit beta''</fullName>
        <shortName evidence="1">RNA polymerase subunit beta''</shortName>
    </alternativeName>
</protein>
<proteinExistence type="inferred from homology"/>
<keyword id="KW-0150">Chloroplast</keyword>
<keyword id="KW-0240">DNA-directed RNA polymerase</keyword>
<keyword id="KW-0479">Metal-binding</keyword>
<keyword id="KW-0548">Nucleotidyltransferase</keyword>
<keyword id="KW-0934">Plastid</keyword>
<keyword id="KW-0804">Transcription</keyword>
<keyword id="KW-0808">Transferase</keyword>
<keyword id="KW-0862">Zinc</keyword>
<comment type="function">
    <text evidence="1">DNA-dependent RNA polymerase catalyzes the transcription of DNA into RNA using the four ribonucleoside triphosphates as substrates.</text>
</comment>
<comment type="catalytic activity">
    <reaction evidence="1">
        <text>RNA(n) + a ribonucleoside 5'-triphosphate = RNA(n+1) + diphosphate</text>
        <dbReference type="Rhea" id="RHEA:21248"/>
        <dbReference type="Rhea" id="RHEA-COMP:14527"/>
        <dbReference type="Rhea" id="RHEA-COMP:17342"/>
        <dbReference type="ChEBI" id="CHEBI:33019"/>
        <dbReference type="ChEBI" id="CHEBI:61557"/>
        <dbReference type="ChEBI" id="CHEBI:140395"/>
        <dbReference type="EC" id="2.7.7.6"/>
    </reaction>
</comment>
<comment type="cofactor">
    <cofactor evidence="1">
        <name>Zn(2+)</name>
        <dbReference type="ChEBI" id="CHEBI:29105"/>
    </cofactor>
    <text evidence="1">Binds 1 Zn(2+) ion per subunit.</text>
</comment>
<comment type="subunit">
    <text evidence="1">In plastids the minimal PEP RNA polymerase catalytic core is composed of four subunits: alpha, beta, beta', and beta''. When a (nuclear-encoded) sigma factor is associated with the core the holoenzyme is formed, which can initiate transcription.</text>
</comment>
<comment type="subcellular location">
    <subcellularLocation>
        <location evidence="1">Plastid</location>
        <location evidence="1">Chloroplast</location>
    </subcellularLocation>
</comment>
<comment type="similarity">
    <text evidence="1">Belongs to the RNA polymerase beta' chain family. RpoC2 subfamily.</text>
</comment>
<gene>
    <name evidence="1" type="primary">rpoC2</name>
</gene>
<name>RPOC2_CYACA</name>
<organism>
    <name type="scientific">Cyanidium caldarium</name>
    <name type="common">Red alga</name>
    <dbReference type="NCBI Taxonomy" id="2771"/>
    <lineage>
        <taxon>Eukaryota</taxon>
        <taxon>Rhodophyta</taxon>
        <taxon>Bangiophyceae</taxon>
        <taxon>Cyanidiales</taxon>
        <taxon>Cyanidiaceae</taxon>
        <taxon>Cyanidium</taxon>
    </lineage>
</organism>